<protein>
    <recommendedName>
        <fullName>Flagellar biosynthetic protein FlhB</fullName>
    </recommendedName>
</protein>
<feature type="chain" id="PRO_0000180949" description="Flagellar biosynthetic protein FlhB">
    <location>
        <begin position="1"/>
        <end position="382"/>
    </location>
</feature>
<feature type="topological domain" description="Periplasmic" evidence="1">
    <location>
        <begin position="1"/>
        <end position="31"/>
    </location>
</feature>
<feature type="transmembrane region" description="Helical" evidence="1">
    <location>
        <begin position="32"/>
        <end position="52"/>
    </location>
</feature>
<feature type="topological domain" description="Cytoplasmic" evidence="1">
    <location>
        <begin position="53"/>
        <end position="73"/>
    </location>
</feature>
<feature type="transmembrane region" description="Helical" evidence="1">
    <location>
        <begin position="74"/>
        <end position="94"/>
    </location>
</feature>
<feature type="transmembrane region" description="Helical" evidence="1">
    <location>
        <begin position="95"/>
        <end position="115"/>
    </location>
</feature>
<feature type="topological domain" description="Cytoplasmic" evidence="1">
    <location>
        <begin position="116"/>
        <end position="144"/>
    </location>
</feature>
<feature type="transmembrane region" description="Helical" evidence="1">
    <location>
        <begin position="145"/>
        <end position="165"/>
    </location>
</feature>
<feature type="topological domain" description="Periplasmic" evidence="1">
    <location>
        <begin position="166"/>
        <end position="189"/>
    </location>
</feature>
<feature type="transmembrane region" description="Helical" evidence="1">
    <location>
        <begin position="190"/>
        <end position="210"/>
    </location>
</feature>
<feature type="topological domain" description="Cytoplasmic" evidence="1">
    <location>
        <begin position="211"/>
        <end position="382"/>
    </location>
</feature>
<feature type="region of interest" description="Disordered" evidence="2">
    <location>
        <begin position="1"/>
        <end position="25"/>
    </location>
</feature>
<feature type="compositionally biased region" description="Basic and acidic residues" evidence="2">
    <location>
        <begin position="8"/>
        <end position="25"/>
    </location>
</feature>
<feature type="sequence conflict" description="In Ref. 1; AAC17834." evidence="3" ref="1">
    <original>A</original>
    <variation>R</variation>
    <location>
        <position position="250"/>
    </location>
</feature>
<feature type="sequence conflict" description="In Ref. 1; AAC17834." evidence="3" ref="1">
    <original>P</original>
    <variation>R</variation>
    <location>
        <position position="316"/>
    </location>
</feature>
<keyword id="KW-1005">Bacterial flagellum biogenesis</keyword>
<keyword id="KW-1006">Bacterial flagellum protein export</keyword>
<keyword id="KW-0997">Cell inner membrane</keyword>
<keyword id="KW-1003">Cell membrane</keyword>
<keyword id="KW-0472">Membrane</keyword>
<keyword id="KW-0653">Protein transport</keyword>
<keyword id="KW-1185">Reference proteome</keyword>
<keyword id="KW-0812">Transmembrane</keyword>
<keyword id="KW-1133">Transmembrane helix</keyword>
<keyword id="KW-0813">Transport</keyword>
<dbReference type="EMBL" id="U88319">
    <property type="protein sequence ID" value="AAC17834.1"/>
    <property type="molecule type" value="Genomic_DNA"/>
</dbReference>
<dbReference type="EMBL" id="U00096">
    <property type="protein sequence ID" value="AAC74950.1"/>
    <property type="molecule type" value="Genomic_DNA"/>
</dbReference>
<dbReference type="EMBL" id="AP009048">
    <property type="protein sequence ID" value="BAA15696.1"/>
    <property type="molecule type" value="Genomic_DNA"/>
</dbReference>
<dbReference type="PIR" id="H64950">
    <property type="entry name" value="H64950"/>
</dbReference>
<dbReference type="RefSeq" id="NP_416394.1">
    <property type="nucleotide sequence ID" value="NC_000913.3"/>
</dbReference>
<dbReference type="RefSeq" id="WP_001278954.1">
    <property type="nucleotide sequence ID" value="NZ_STEB01000026.1"/>
</dbReference>
<dbReference type="SMR" id="P76299"/>
<dbReference type="BioGRID" id="4260378">
    <property type="interactions" value="21"/>
</dbReference>
<dbReference type="ComplexPortal" id="CPX-5885">
    <property type="entry name" value="Flagellar export complex"/>
</dbReference>
<dbReference type="FunCoup" id="P76299">
    <property type="interactions" value="101"/>
</dbReference>
<dbReference type="IntAct" id="P76299">
    <property type="interactions" value="3"/>
</dbReference>
<dbReference type="STRING" id="511145.b1880"/>
<dbReference type="MEROPS" id="N06.A01"/>
<dbReference type="PaxDb" id="511145-b1880"/>
<dbReference type="EnsemblBacteria" id="AAC74950">
    <property type="protein sequence ID" value="AAC74950"/>
    <property type="gene ID" value="b1880"/>
</dbReference>
<dbReference type="GeneID" id="75202714"/>
<dbReference type="GeneID" id="946391"/>
<dbReference type="KEGG" id="ecj:JW1869"/>
<dbReference type="KEGG" id="eco:b1880"/>
<dbReference type="KEGG" id="ecoc:C3026_10695"/>
<dbReference type="PATRIC" id="fig|1411691.4.peg.368"/>
<dbReference type="EchoBASE" id="EB3789"/>
<dbReference type="eggNOG" id="COG1377">
    <property type="taxonomic scope" value="Bacteria"/>
</dbReference>
<dbReference type="HOGENOM" id="CLU_041013_1_2_6"/>
<dbReference type="InParanoid" id="P76299"/>
<dbReference type="OMA" id="IRMSKQD"/>
<dbReference type="OrthoDB" id="9807950at2"/>
<dbReference type="PhylomeDB" id="P76299"/>
<dbReference type="BioCyc" id="EcoCyc:G7028-MONOMER"/>
<dbReference type="PHI-base" id="PHI:11174"/>
<dbReference type="PRO" id="PR:P76299"/>
<dbReference type="Proteomes" id="UP000000625">
    <property type="component" value="Chromosome"/>
</dbReference>
<dbReference type="GO" id="GO:0009288">
    <property type="term" value="C:bacterial-type flagellum"/>
    <property type="evidence" value="ECO:0000303"/>
    <property type="project" value="ComplexPortal"/>
</dbReference>
<dbReference type="GO" id="GO:0120102">
    <property type="term" value="C:bacterial-type flagellum secretion apparatus"/>
    <property type="evidence" value="ECO:0000303"/>
    <property type="project" value="ComplexPortal"/>
</dbReference>
<dbReference type="GO" id="GO:0005886">
    <property type="term" value="C:plasma membrane"/>
    <property type="evidence" value="ECO:0000314"/>
    <property type="project" value="EcoCyc"/>
</dbReference>
<dbReference type="GO" id="GO:0030257">
    <property type="term" value="C:type III protein secretion system complex"/>
    <property type="evidence" value="ECO:0000303"/>
    <property type="project" value="ComplexPortal"/>
</dbReference>
<dbReference type="GO" id="GO:0044780">
    <property type="term" value="P:bacterial-type flagellum assembly"/>
    <property type="evidence" value="ECO:0007669"/>
    <property type="project" value="InterPro"/>
</dbReference>
<dbReference type="GO" id="GO:0071973">
    <property type="term" value="P:bacterial-type flagellum-dependent cell motility"/>
    <property type="evidence" value="ECO:0000303"/>
    <property type="project" value="ComplexPortal"/>
</dbReference>
<dbReference type="GO" id="GO:0006935">
    <property type="term" value="P:chemotaxis"/>
    <property type="evidence" value="ECO:0000303"/>
    <property type="project" value="ComplexPortal"/>
</dbReference>
<dbReference type="GO" id="GO:0030254">
    <property type="term" value="P:protein secretion by the type III secretion system"/>
    <property type="evidence" value="ECO:0000303"/>
    <property type="project" value="ComplexPortal"/>
</dbReference>
<dbReference type="FunFam" id="3.40.1690.10:FF:000001">
    <property type="entry name" value="Flagellar biosynthetic protein FlhB"/>
    <property type="match status" value="1"/>
</dbReference>
<dbReference type="Gene3D" id="6.10.250.2080">
    <property type="match status" value="1"/>
</dbReference>
<dbReference type="Gene3D" id="3.40.1690.10">
    <property type="entry name" value="secretion proteins EscU"/>
    <property type="match status" value="1"/>
</dbReference>
<dbReference type="InterPro" id="IPR006136">
    <property type="entry name" value="FlhB"/>
</dbReference>
<dbReference type="InterPro" id="IPR006135">
    <property type="entry name" value="T3SS_substrate_exporter"/>
</dbReference>
<dbReference type="InterPro" id="IPR029025">
    <property type="entry name" value="T3SS_substrate_exporter_C"/>
</dbReference>
<dbReference type="NCBIfam" id="TIGR00328">
    <property type="entry name" value="flhB"/>
    <property type="match status" value="1"/>
</dbReference>
<dbReference type="PANTHER" id="PTHR30531">
    <property type="entry name" value="FLAGELLAR BIOSYNTHETIC PROTEIN FLHB"/>
    <property type="match status" value="1"/>
</dbReference>
<dbReference type="PANTHER" id="PTHR30531:SF12">
    <property type="entry name" value="FLAGELLAR BIOSYNTHETIC PROTEIN FLHB"/>
    <property type="match status" value="1"/>
</dbReference>
<dbReference type="Pfam" id="PF01312">
    <property type="entry name" value="Bac_export_2"/>
    <property type="match status" value="1"/>
</dbReference>
<dbReference type="PRINTS" id="PR00950">
    <property type="entry name" value="TYPE3IMSPROT"/>
</dbReference>
<dbReference type="SUPFAM" id="SSF160544">
    <property type="entry name" value="EscU C-terminal domain-like"/>
    <property type="match status" value="1"/>
</dbReference>
<proteinExistence type="evidence at protein level"/>
<comment type="function">
    <text>Required for formation of the rod structure in the basal body of the flagellar apparatus. Together with FliI and FliH, may constitute the export apparatus of flagellin.</text>
</comment>
<comment type="subcellular location">
    <subcellularLocation>
        <location>Cell inner membrane</location>
        <topology>Multi-pass membrane protein</topology>
    </subcellularLocation>
</comment>
<comment type="similarity">
    <text evidence="3">Belongs to the type III secretion exporter family.</text>
</comment>
<accession>P76299</accession>
<accession>O87955</accession>
<name>FLHB_ECOLI</name>
<sequence length="382" mass="42238">MSDESDDKTEAPTPHRLEKAREEGQIPRSRELTSLLILLVGVSVIWFGGVSLARRLSGMLSAGLHFDHSIINDPNLILGQIILLIREAMLALLPLISGVVLVALISPVMLGGLVFSGKSLQPKFSKLNPLPGIKRMFSAQTGAELLKAILKTILVGSVTGFFLWHHWPQMMRLMAESPITAMGNAMDLVGLCALLVVLGVIPMVGFDVFFQIFSHLKKLRMSRQDIRDEFKQSEGDPHVKGRIRQMQRAAARRRMMADVPKADVIVNNPTHYSVALQYDENKMSAPKVVAKGAGLVALRIREIGAENNVPTLEAPPLARALYRHAEIGQQIPGQLYAAVAEVLAWVWQLKRWRLAGGQRPVQPTHLPVPEALDFINEKPTHE</sequence>
<gene>
    <name type="primary">flhB</name>
    <name type="synonym">yecQ</name>
    <name type="ordered locus">b1880</name>
    <name type="ordered locus">JW1869</name>
</gene>
<reference key="1">
    <citation type="submission" date="1997-02" db="EMBL/GenBank/DDBJ databases">
        <title>Genomic organization of flhB operon in E.coli.</title>
        <authorList>
            <person name="Cho M."/>
            <person name="Matsumura P."/>
        </authorList>
    </citation>
    <scope>NUCLEOTIDE SEQUENCE [GENOMIC DNA]</scope>
</reference>
<reference key="2">
    <citation type="journal article" date="1996" name="DNA Res.">
        <title>A 460-kb DNA sequence of the Escherichia coli K-12 genome corresponding to the 40.1-50.0 min region on the linkage map.</title>
        <authorList>
            <person name="Itoh T."/>
            <person name="Aiba H."/>
            <person name="Baba T."/>
            <person name="Fujita K."/>
            <person name="Hayashi K."/>
            <person name="Inada T."/>
            <person name="Isono K."/>
            <person name="Kasai H."/>
            <person name="Kimura S."/>
            <person name="Kitakawa M."/>
            <person name="Kitagawa M."/>
            <person name="Makino K."/>
            <person name="Miki T."/>
            <person name="Mizobuchi K."/>
            <person name="Mori H."/>
            <person name="Mori T."/>
            <person name="Motomura K."/>
            <person name="Nakade S."/>
            <person name="Nakamura Y."/>
            <person name="Nashimoto H."/>
            <person name="Nishio Y."/>
            <person name="Oshima T."/>
            <person name="Saito N."/>
            <person name="Sampei G."/>
            <person name="Seki Y."/>
            <person name="Sivasundaram S."/>
            <person name="Tagami H."/>
            <person name="Takeda J."/>
            <person name="Takemoto K."/>
            <person name="Wada C."/>
            <person name="Yamamoto Y."/>
            <person name="Horiuchi T."/>
        </authorList>
    </citation>
    <scope>NUCLEOTIDE SEQUENCE [LARGE SCALE GENOMIC DNA]</scope>
    <source>
        <strain>K12 / W3110 / ATCC 27325 / DSM 5911</strain>
    </source>
</reference>
<reference key="3">
    <citation type="journal article" date="1997" name="Science">
        <title>The complete genome sequence of Escherichia coli K-12.</title>
        <authorList>
            <person name="Blattner F.R."/>
            <person name="Plunkett G. III"/>
            <person name="Bloch C.A."/>
            <person name="Perna N.T."/>
            <person name="Burland V."/>
            <person name="Riley M."/>
            <person name="Collado-Vides J."/>
            <person name="Glasner J.D."/>
            <person name="Rode C.K."/>
            <person name="Mayhew G.F."/>
            <person name="Gregor J."/>
            <person name="Davis N.W."/>
            <person name="Kirkpatrick H.A."/>
            <person name="Goeden M.A."/>
            <person name="Rose D.J."/>
            <person name="Mau B."/>
            <person name="Shao Y."/>
        </authorList>
    </citation>
    <scope>NUCLEOTIDE SEQUENCE [LARGE SCALE GENOMIC DNA]</scope>
    <source>
        <strain>K12 / MG1655 / ATCC 47076</strain>
    </source>
</reference>
<reference key="4">
    <citation type="journal article" date="2006" name="Mol. Syst. Biol.">
        <title>Highly accurate genome sequences of Escherichia coli K-12 strains MG1655 and W3110.</title>
        <authorList>
            <person name="Hayashi K."/>
            <person name="Morooka N."/>
            <person name="Yamamoto Y."/>
            <person name="Fujita K."/>
            <person name="Isono K."/>
            <person name="Choi S."/>
            <person name="Ohtsubo E."/>
            <person name="Baba T."/>
            <person name="Wanner B.L."/>
            <person name="Mori H."/>
            <person name="Horiuchi T."/>
        </authorList>
    </citation>
    <scope>NUCLEOTIDE SEQUENCE [LARGE SCALE GENOMIC DNA]</scope>
    <source>
        <strain>K12 / W3110 / ATCC 27325 / DSM 5911</strain>
    </source>
</reference>
<reference key="5">
    <citation type="journal article" date="2005" name="Science">
        <title>Global topology analysis of the Escherichia coli inner membrane proteome.</title>
        <authorList>
            <person name="Daley D.O."/>
            <person name="Rapp M."/>
            <person name="Granseth E."/>
            <person name="Melen K."/>
            <person name="Drew D."/>
            <person name="von Heijne G."/>
        </authorList>
    </citation>
    <scope>TOPOLOGY [LARGE SCALE ANALYSIS]</scope>
    <source>
        <strain>K12 / MG1655 / ATCC 47076</strain>
    </source>
</reference>
<evidence type="ECO:0000255" key="1"/>
<evidence type="ECO:0000256" key="2">
    <source>
        <dbReference type="SAM" id="MobiDB-lite"/>
    </source>
</evidence>
<evidence type="ECO:0000305" key="3"/>
<organism>
    <name type="scientific">Escherichia coli (strain K12)</name>
    <dbReference type="NCBI Taxonomy" id="83333"/>
    <lineage>
        <taxon>Bacteria</taxon>
        <taxon>Pseudomonadati</taxon>
        <taxon>Pseudomonadota</taxon>
        <taxon>Gammaproteobacteria</taxon>
        <taxon>Enterobacterales</taxon>
        <taxon>Enterobacteriaceae</taxon>
        <taxon>Escherichia</taxon>
    </lineage>
</organism>